<proteinExistence type="evidence at protein level"/>
<evidence type="ECO:0000255" key="1">
    <source>
        <dbReference type="HAMAP-Rule" id="MF_01979"/>
    </source>
</evidence>
<evidence type="ECO:0000269" key="2">
    <source>
    </source>
</evidence>
<evidence type="ECO:0000269" key="3">
    <source>
    </source>
</evidence>
<evidence type="ECO:0000305" key="4"/>
<dbReference type="EC" id="2.7.1.90" evidence="1"/>
<dbReference type="EMBL" id="AF044973">
    <property type="protein sequence ID" value="AAD13344.1"/>
    <property type="molecule type" value="Genomic_DNA"/>
</dbReference>
<dbReference type="EMBL" id="DS113294">
    <property type="protein sequence ID" value="EAY12916.1"/>
    <property type="molecule type" value="Genomic_DNA"/>
</dbReference>
<dbReference type="RefSeq" id="XP_001325139.1">
    <property type="nucleotide sequence ID" value="XM_001325104.1"/>
</dbReference>
<dbReference type="PDB" id="9DQM">
    <property type="method" value="X-ray"/>
    <property type="resolution" value="2.20 A"/>
    <property type="chains" value="A/B=1-426"/>
</dbReference>
<dbReference type="PDB" id="9MDT">
    <property type="method" value="X-ray"/>
    <property type="resolution" value="2.16 A"/>
    <property type="chains" value="A/B/C/D=1-426"/>
</dbReference>
<dbReference type="PDB" id="9MEA">
    <property type="method" value="X-ray"/>
    <property type="resolution" value="2.83 A"/>
    <property type="chains" value="A/B/C/D=1-426"/>
</dbReference>
<dbReference type="PDB" id="9MEC">
    <property type="method" value="X-ray"/>
    <property type="resolution" value="2.80 A"/>
    <property type="chains" value="A/B/C/D=1-426"/>
</dbReference>
<dbReference type="PDB" id="9MED">
    <property type="method" value="X-ray"/>
    <property type="resolution" value="2.62 A"/>
    <property type="chains" value="A/B/C/D=1-426"/>
</dbReference>
<dbReference type="PDB" id="9MF6">
    <property type="method" value="X-ray"/>
    <property type="resolution" value="2.65 A"/>
    <property type="chains" value="A/B/C/D=1-426"/>
</dbReference>
<dbReference type="PDBsum" id="9DQM"/>
<dbReference type="PDBsum" id="9MDT"/>
<dbReference type="PDBsum" id="9MEA"/>
<dbReference type="PDBsum" id="9MEC"/>
<dbReference type="PDBsum" id="9MED"/>
<dbReference type="PDBsum" id="9MF6"/>
<dbReference type="SMR" id="O61068"/>
<dbReference type="STRING" id="5722.O61068"/>
<dbReference type="KEGG" id="tva:TVAG_2v1017540"/>
<dbReference type="VEuPathDB" id="TrichDB:TVAG_364620"/>
<dbReference type="VEuPathDB" id="TrichDB:TVAGG3_1017540"/>
<dbReference type="eggNOG" id="KOG2440">
    <property type="taxonomic scope" value="Eukaryota"/>
</dbReference>
<dbReference type="InParanoid" id="O61068"/>
<dbReference type="OMA" id="TTARSHE"/>
<dbReference type="OrthoDB" id="537915at2759"/>
<dbReference type="UniPathway" id="UPA00109">
    <property type="reaction ID" value="UER00182"/>
</dbReference>
<dbReference type="Proteomes" id="UP000001542">
    <property type="component" value="Unassembled WGS sequence"/>
</dbReference>
<dbReference type="GO" id="GO:0005737">
    <property type="term" value="C:cytoplasm"/>
    <property type="evidence" value="ECO:0007669"/>
    <property type="project" value="UniProtKB-SubCell"/>
</dbReference>
<dbReference type="GO" id="GO:0003872">
    <property type="term" value="F:6-phosphofructokinase activity"/>
    <property type="evidence" value="ECO:0007669"/>
    <property type="project" value="UniProtKB-UniRule"/>
</dbReference>
<dbReference type="GO" id="GO:0047334">
    <property type="term" value="F:diphosphate-fructose-6-phosphate 1-phosphotransferase activity"/>
    <property type="evidence" value="ECO:0007669"/>
    <property type="project" value="UniProtKB-EC"/>
</dbReference>
<dbReference type="GO" id="GO:0046872">
    <property type="term" value="F:metal ion binding"/>
    <property type="evidence" value="ECO:0007669"/>
    <property type="project" value="UniProtKB-KW"/>
</dbReference>
<dbReference type="GO" id="GO:0008443">
    <property type="term" value="F:phosphofructokinase activity"/>
    <property type="evidence" value="ECO:0000318"/>
    <property type="project" value="GO_Central"/>
</dbReference>
<dbReference type="GO" id="GO:0006002">
    <property type="term" value="P:fructose 6-phosphate metabolic process"/>
    <property type="evidence" value="ECO:0007669"/>
    <property type="project" value="InterPro"/>
</dbReference>
<dbReference type="GO" id="GO:0009749">
    <property type="term" value="P:response to glucose"/>
    <property type="evidence" value="ECO:0000318"/>
    <property type="project" value="GO_Central"/>
</dbReference>
<dbReference type="FunFam" id="3.40.50.450:FF:000039">
    <property type="entry name" value="Pyrophosphate--fructose 6-phosphate 1-phosphotransferase"/>
    <property type="match status" value="1"/>
</dbReference>
<dbReference type="FunFam" id="3.40.50.460:FF:000020">
    <property type="entry name" value="Pyrophosphate--fructose 6-phosphate 1-phosphotransferase 1"/>
    <property type="match status" value="1"/>
</dbReference>
<dbReference type="Gene3D" id="3.40.50.450">
    <property type="match status" value="1"/>
</dbReference>
<dbReference type="Gene3D" id="3.40.50.460">
    <property type="entry name" value="Phosphofructokinase domain"/>
    <property type="match status" value="1"/>
</dbReference>
<dbReference type="HAMAP" id="MF_01979">
    <property type="entry name" value="Phosphofructokinase_II_Short"/>
    <property type="match status" value="1"/>
</dbReference>
<dbReference type="InterPro" id="IPR022953">
    <property type="entry name" value="ATP_PFK"/>
</dbReference>
<dbReference type="InterPro" id="IPR000023">
    <property type="entry name" value="Phosphofructokinase_dom"/>
</dbReference>
<dbReference type="InterPro" id="IPR035966">
    <property type="entry name" value="PKF_sf"/>
</dbReference>
<dbReference type="InterPro" id="IPR011403">
    <property type="entry name" value="PPi-PFK_TM0289"/>
</dbReference>
<dbReference type="PANTHER" id="PTHR43650">
    <property type="entry name" value="PYROPHOSPHATE--FRUCTOSE 6-PHOSPHATE 1-PHOSPHOTRANSFERASE"/>
    <property type="match status" value="1"/>
</dbReference>
<dbReference type="PANTHER" id="PTHR43650:SF1">
    <property type="entry name" value="PYROPHOSPHATE--FRUCTOSE 6-PHOSPHATE 1-PHOSPHOTRANSFERASE SUBUNIT BETA 2"/>
    <property type="match status" value="1"/>
</dbReference>
<dbReference type="Pfam" id="PF00365">
    <property type="entry name" value="PFK"/>
    <property type="match status" value="1"/>
</dbReference>
<dbReference type="PIRSF" id="PIRSF036482">
    <property type="entry name" value="PPi_PFK_TM0289"/>
    <property type="match status" value="1"/>
</dbReference>
<dbReference type="PRINTS" id="PR00476">
    <property type="entry name" value="PHFRCTKINASE"/>
</dbReference>
<dbReference type="SUPFAM" id="SSF53784">
    <property type="entry name" value="Phosphofructokinase"/>
    <property type="match status" value="1"/>
</dbReference>
<name>PFP1_TRIV3</name>
<organism>
    <name type="scientific">Trichomonas vaginalis (strain ATCC PRA-98 / G3)</name>
    <dbReference type="NCBI Taxonomy" id="412133"/>
    <lineage>
        <taxon>Eukaryota</taxon>
        <taxon>Metamonada</taxon>
        <taxon>Parabasalia</taxon>
        <taxon>Trichomonadida</taxon>
        <taxon>Trichomonadidae</taxon>
        <taxon>Trichomonas</taxon>
    </lineage>
</organism>
<sequence length="426" mass="46535">MSTEAPVLGILCGGGPAPGLNGVIAGATLYALRLGWKVIGFMEGFKYLCTGDVDVVKAHTIDLTYDIVSRIHFQGGTIIQTSRANPRKSPELQENVRKCLRALKVRYFLTIGGDDTASSAVSVASGMNGNEISVISCPKTIDNDLPLPADQSTFGFHTARSLGMEIIRNLMVDSKSAPRWFLVEAMGRSAGHLALGMAEASGAHLCLIPEEFKQDEIEFEDVVELVEATILKRLAYGKNYGVCVLAEGLVSKMSKKALYKLFGNREPPTDPHGHILLDDAELARSLSEELLKRLGNLGIRITPKKIGYELRCADPVAFDAVYTRELGYGAIDAFLNGHSAALIVRENGQVKPVQFKDLLDPATGRVRTRLVDVTSQSFKVARVYMWRMSKKDYENKDLVARVAAAGKMTPEAFTEKFAHLTDVVVE</sequence>
<accession>O61068</accession>
<accession>A2E3A6</accession>
<protein>
    <recommendedName>
        <fullName evidence="1">Pyrophosphate--fructose 6-phosphate 1-phosphotransferase 1</fullName>
        <ecNumber evidence="1">2.7.1.90</ecNumber>
    </recommendedName>
    <alternativeName>
        <fullName evidence="1">6-phosphofructokinase, pyrophosphate dependent 1</fullName>
    </alternativeName>
    <alternativeName>
        <fullName evidence="1">PPi-dependent phosphofructokinase 1</fullName>
        <shortName evidence="1">PPi-PFK 1</shortName>
    </alternativeName>
    <alternativeName>
        <fullName evidence="1">Pyrophosphate-dependent 6-phosphofructose-1-kinase 1</fullName>
    </alternativeName>
</protein>
<reference key="1">
    <citation type="journal article" date="1998" name="J. Mol. Evol.">
        <title>The pyrophosphate-dependent phosphofructokinase of the protist, Trichomonas vaginalis, and the evolutionary relationships of protist phosphofructokinases.</title>
        <authorList>
            <person name="Mertens E."/>
            <person name="Ladror U.S."/>
            <person name="Lee J.A."/>
            <person name="Miretsky A."/>
            <person name="Morris A."/>
            <person name="Rozario C."/>
            <person name="Kemp R.G."/>
            <person name="Muller M."/>
        </authorList>
    </citation>
    <scope>NUCLEOTIDE SEQUENCE [GENOMIC DNA]</scope>
    <scope>PROTEIN SEQUENCE OF 88-97; 140-175; 180-204; 261-279; 301-310; 312-335 AND 383-387</scope>
    <scope>SUBUNIT</scope>
    <source>
        <strain>ATCC 30001 / NIH C1</strain>
    </source>
</reference>
<reference key="2">
    <citation type="journal article" date="2007" name="Science">
        <title>Draft genome sequence of the sexually transmitted pathogen Trichomonas vaginalis.</title>
        <authorList>
            <person name="Carlton J.M."/>
            <person name="Hirt R.P."/>
            <person name="Silva J.C."/>
            <person name="Delcher A.L."/>
            <person name="Schatz M."/>
            <person name="Zhao Q."/>
            <person name="Wortman J.R."/>
            <person name="Bidwell S.L."/>
            <person name="Alsmark U.C.M."/>
            <person name="Besteiro S."/>
            <person name="Sicheritz-Ponten T."/>
            <person name="Noel C.J."/>
            <person name="Dacks J.B."/>
            <person name="Foster P.G."/>
            <person name="Simillion C."/>
            <person name="Van de Peer Y."/>
            <person name="Miranda-Saavedra D."/>
            <person name="Barton G.J."/>
            <person name="Westrop G.D."/>
            <person name="Mueller S."/>
            <person name="Dessi D."/>
            <person name="Fiori P.L."/>
            <person name="Ren Q."/>
            <person name="Paulsen I."/>
            <person name="Zhang H."/>
            <person name="Bastida-Corcuera F.D."/>
            <person name="Simoes-Barbosa A."/>
            <person name="Brown M.T."/>
            <person name="Hayes R.D."/>
            <person name="Mukherjee M."/>
            <person name="Okumura C.Y."/>
            <person name="Schneider R."/>
            <person name="Smith A.J."/>
            <person name="Vanacova S."/>
            <person name="Villalvazo M."/>
            <person name="Haas B.J."/>
            <person name="Pertea M."/>
            <person name="Feldblyum T.V."/>
            <person name="Utterback T.R."/>
            <person name="Shu C.L."/>
            <person name="Osoegawa K."/>
            <person name="de Jong P.J."/>
            <person name="Hrdy I."/>
            <person name="Horvathova L."/>
            <person name="Zubacova Z."/>
            <person name="Dolezal P."/>
            <person name="Malik S.B."/>
            <person name="Logsdon J.M. Jr."/>
            <person name="Henze K."/>
            <person name="Gupta A."/>
            <person name="Wang C.C."/>
            <person name="Dunne R.L."/>
            <person name="Upcroft J.A."/>
            <person name="Upcroft P."/>
            <person name="White O."/>
            <person name="Salzberg S.L."/>
            <person name="Tang P."/>
            <person name="Chiu C.-H."/>
            <person name="Lee Y.-S."/>
            <person name="Embley T.M."/>
            <person name="Coombs G.H."/>
            <person name="Mottram J.C."/>
            <person name="Tachezy J."/>
            <person name="Fraser-Liggett C.M."/>
            <person name="Johnson P.J."/>
        </authorList>
    </citation>
    <scope>NUCLEOTIDE SEQUENCE [LARGE SCALE GENOMIC DNA]</scope>
    <source>
        <strain>ATCC PRA-98 / G3</strain>
    </source>
</reference>
<reference key="3">
    <citation type="journal article" date="1989" name="Mol. Biochem. Parasitol.">
        <title>Presence of a fructose-2,6-bisphosphate-insensitive pyrophosphate: fructose-6-phosphate phosphotransferase in the anaerobic protozoa Tritrichomonas foetus, Trichomonas vaginalis and Isotricha prostoma.</title>
        <authorList>
            <person name="Mertens E."/>
            <person name="Van Schaftingen E."/>
            <person name="Muller M."/>
        </authorList>
    </citation>
    <scope>FUNCTION</scope>
    <scope>CATALYTIC ACTIVITY</scope>
    <source>
        <strain>ATCC 30001 / NIH C1</strain>
    </source>
</reference>
<gene>
    <name type="primary">Pfk1</name>
    <name type="ORF">TVAG_430830</name>
</gene>
<feature type="chain" id="PRO_0000429702" description="Pyrophosphate--fructose 6-phosphate 1-phosphotransferase 1">
    <location>
        <begin position="1"/>
        <end position="426"/>
    </location>
</feature>
<feature type="active site" description="Proton acceptor" evidence="1">
    <location>
        <position position="142"/>
    </location>
</feature>
<feature type="binding site" evidence="1">
    <location>
        <position position="15"/>
    </location>
    <ligand>
        <name>diphosphate</name>
        <dbReference type="ChEBI" id="CHEBI:33019"/>
    </ligand>
</feature>
<feature type="binding site" evidence="1">
    <location>
        <position position="114"/>
    </location>
    <ligand>
        <name>Mg(2+)</name>
        <dbReference type="ChEBI" id="CHEBI:18420"/>
        <note>catalytic</note>
    </ligand>
</feature>
<feature type="binding site" evidence="1">
    <location>
        <begin position="140"/>
        <end position="142"/>
    </location>
    <ligand>
        <name>substrate</name>
    </ligand>
</feature>
<feature type="binding site" evidence="1">
    <location>
        <begin position="186"/>
        <end position="188"/>
    </location>
    <ligand>
        <name>substrate</name>
    </ligand>
</feature>
<feature type="binding site" evidence="1">
    <location>
        <position position="247"/>
    </location>
    <ligand>
        <name>substrate</name>
    </ligand>
</feature>
<feature type="binding site" evidence="1">
    <location>
        <begin position="308"/>
        <end position="311"/>
    </location>
    <ligand>
        <name>substrate</name>
    </ligand>
</feature>
<feature type="site" description="Important for catalytic activity and substrate specificity; stabilizes the transition state when the phosphoryl donor is PPi; prevents ATP from binding by mimicking the alpha-phosphate group of ATP" evidence="1">
    <location>
        <position position="115"/>
    </location>
</feature>
<feature type="site" description="Important for catalytic activity; stabilizes the transition state when the phosphoryl donor is PPi" evidence="1">
    <location>
        <position position="139"/>
    </location>
</feature>
<feature type="sequence conflict" description="In Ref. 1; AA sequence." evidence="4" ref="1">
    <original>L</original>
    <variation>KL</variation>
    <location>
        <position position="335"/>
    </location>
</feature>
<keyword id="KW-0002">3D-structure</keyword>
<keyword id="KW-0963">Cytoplasm</keyword>
<keyword id="KW-0903">Direct protein sequencing</keyword>
<keyword id="KW-0324">Glycolysis</keyword>
<keyword id="KW-0418">Kinase</keyword>
<keyword id="KW-0460">Magnesium</keyword>
<keyword id="KW-0479">Metal-binding</keyword>
<keyword id="KW-1185">Reference proteome</keyword>
<keyword id="KW-0808">Transferase</keyword>
<comment type="function">
    <text evidence="1 2">Catalyzes the phosphorylation of D-fructose 6-phosphate, the first committing step of glycolysis. Uses inorganic phosphate (PPi) as phosphoryl donor instead of ATP like common ATP-dependent phosphofructokinases (ATP-PFKs), which renders the reaction reversible, and can thus function both in glycolysis and gluconeogenesis. Consistently, PPi-PFK can replace the enzymes of both the forward (ATP-PFK) and reverse (fructose-bisphosphatase (FBPase)) reactions.</text>
</comment>
<comment type="catalytic activity">
    <reaction evidence="1 2">
        <text>beta-D-fructose 6-phosphate + diphosphate = beta-D-fructose 1,6-bisphosphate + phosphate + H(+)</text>
        <dbReference type="Rhea" id="RHEA:13613"/>
        <dbReference type="ChEBI" id="CHEBI:15378"/>
        <dbReference type="ChEBI" id="CHEBI:32966"/>
        <dbReference type="ChEBI" id="CHEBI:33019"/>
        <dbReference type="ChEBI" id="CHEBI:43474"/>
        <dbReference type="ChEBI" id="CHEBI:57634"/>
        <dbReference type="EC" id="2.7.1.90"/>
    </reaction>
</comment>
<comment type="cofactor">
    <cofactor evidence="1">
        <name>Mg(2+)</name>
        <dbReference type="ChEBI" id="CHEBI:18420"/>
    </cofactor>
</comment>
<comment type="activity regulation">
    <text evidence="1">Non-allosteric.</text>
</comment>
<comment type="pathway">
    <text evidence="1">Carbohydrate degradation; glycolysis; D-glyceraldehyde 3-phosphate and glycerone phosphate from D-glucose: step 3/4.</text>
</comment>
<comment type="subunit">
    <text evidence="1 3">Homotetramer.</text>
</comment>
<comment type="subcellular location">
    <subcellularLocation>
        <location evidence="1">Cytoplasm</location>
    </subcellularLocation>
</comment>
<comment type="similarity">
    <text evidence="1">Belongs to the phosphofructokinase type A (PFKA) family. PPi-dependent PFK group II subfamily. Clade 'Short' sub-subfamily.</text>
</comment>